<feature type="chain" id="PRO_0000283243" description="F-box/kelch-repeat protein At4g19330">
    <location>
        <begin position="1"/>
        <end position="383"/>
    </location>
</feature>
<feature type="domain" description="F-box" evidence="2">
    <location>
        <begin position="28"/>
        <end position="79"/>
    </location>
</feature>
<feature type="repeat" description="Kelch 1" evidence="1">
    <location>
        <begin position="147"/>
        <end position="192"/>
    </location>
</feature>
<feature type="repeat" description="Kelch 2" evidence="1">
    <location>
        <begin position="193"/>
        <end position="239"/>
    </location>
</feature>
<feature type="repeat" description="Kelch 3" evidence="1">
    <location>
        <begin position="272"/>
        <end position="318"/>
    </location>
</feature>
<feature type="region of interest" description="Disordered" evidence="3">
    <location>
        <begin position="1"/>
        <end position="27"/>
    </location>
</feature>
<keyword id="KW-0880">Kelch repeat</keyword>
<keyword id="KW-1185">Reference proteome</keyword>
<keyword id="KW-0677">Repeat</keyword>
<name>FBK83_ARATH</name>
<protein>
    <recommendedName>
        <fullName>F-box/kelch-repeat protein At4g19330</fullName>
    </recommendedName>
    <alternativeName>
        <fullName evidence="6">Protein COLD TEMPERATURE GERMINATING 10</fullName>
    </alternativeName>
</protein>
<organism>
    <name type="scientific">Arabidopsis thaliana</name>
    <name type="common">Mouse-ear cress</name>
    <dbReference type="NCBI Taxonomy" id="3702"/>
    <lineage>
        <taxon>Eukaryota</taxon>
        <taxon>Viridiplantae</taxon>
        <taxon>Streptophyta</taxon>
        <taxon>Embryophyta</taxon>
        <taxon>Tracheophyta</taxon>
        <taxon>Spermatophyta</taxon>
        <taxon>Magnoliopsida</taxon>
        <taxon>eudicotyledons</taxon>
        <taxon>Gunneridae</taxon>
        <taxon>Pentapetalae</taxon>
        <taxon>rosids</taxon>
        <taxon>malvids</taxon>
        <taxon>Brassicales</taxon>
        <taxon>Brassicaceae</taxon>
        <taxon>Camelineae</taxon>
        <taxon>Arabidopsis</taxon>
    </lineage>
</organism>
<evidence type="ECO:0000255" key="1"/>
<evidence type="ECO:0000255" key="2">
    <source>
        <dbReference type="PROSITE-ProRule" id="PRU00080"/>
    </source>
</evidence>
<evidence type="ECO:0000256" key="3">
    <source>
        <dbReference type="SAM" id="MobiDB-lite"/>
    </source>
</evidence>
<evidence type="ECO:0000269" key="4">
    <source ref="1"/>
</evidence>
<evidence type="ECO:0000303" key="5">
    <source ref="1"/>
</evidence>
<evidence type="ECO:0000312" key="6">
    <source>
        <dbReference type="EMBL" id="ABG75719.1"/>
    </source>
</evidence>
<evidence type="ECO:0000312" key="7">
    <source>
        <dbReference type="EMBL" id="CAA18620.1"/>
    </source>
</evidence>
<dbReference type="EMBL" id="DQ666277">
    <property type="protein sequence ID" value="ABG75719.1"/>
    <property type="molecule type" value="Genomic_DNA"/>
</dbReference>
<dbReference type="EMBL" id="AL022580">
    <property type="protein sequence ID" value="CAA18620.1"/>
    <property type="status" value="ALT_SEQ"/>
    <property type="molecule type" value="Genomic_DNA"/>
</dbReference>
<dbReference type="EMBL" id="AL161550">
    <property type="protein sequence ID" value="CAB78935.1"/>
    <property type="status" value="ALT_SEQ"/>
    <property type="molecule type" value="Genomic_DNA"/>
</dbReference>
<dbReference type="EMBL" id="CP002687">
    <property type="protein sequence ID" value="AEE84168.2"/>
    <property type="molecule type" value="Genomic_DNA"/>
</dbReference>
<dbReference type="PIR" id="T05816">
    <property type="entry name" value="T05816"/>
</dbReference>
<dbReference type="RefSeq" id="NP_001319995.1">
    <property type="nucleotide sequence ID" value="NM_001341333.1"/>
</dbReference>
<dbReference type="SMR" id="O65704"/>
<dbReference type="STRING" id="3702.O65704"/>
<dbReference type="PaxDb" id="3702-AT4G19330.1"/>
<dbReference type="EnsemblPlants" id="AT4G19330.1">
    <property type="protein sequence ID" value="AT4G19330.1"/>
    <property type="gene ID" value="AT4G19330"/>
</dbReference>
<dbReference type="GeneID" id="28720147"/>
<dbReference type="Gramene" id="AT4G19330.1">
    <property type="protein sequence ID" value="AT4G19330.1"/>
    <property type="gene ID" value="AT4G19330"/>
</dbReference>
<dbReference type="KEGG" id="ath:AT4G19330"/>
<dbReference type="Araport" id="AT4G19330"/>
<dbReference type="TAIR" id="AT4G19330">
    <property type="gene designation" value="CTG10"/>
</dbReference>
<dbReference type="eggNOG" id="KOG1072">
    <property type="taxonomic scope" value="Eukaryota"/>
</dbReference>
<dbReference type="eggNOG" id="KOG1073">
    <property type="taxonomic scope" value="Eukaryota"/>
</dbReference>
<dbReference type="HOGENOM" id="CLU_524158_0_0_1"/>
<dbReference type="InParanoid" id="O65704"/>
<dbReference type="OMA" id="SGESECW"/>
<dbReference type="PhylomeDB" id="O65704"/>
<dbReference type="PRO" id="PR:O65704"/>
<dbReference type="Proteomes" id="UP000006548">
    <property type="component" value="Chromosome 4"/>
</dbReference>
<dbReference type="GO" id="GO:0009409">
    <property type="term" value="P:response to cold"/>
    <property type="evidence" value="ECO:0000315"/>
    <property type="project" value="UniProtKB"/>
</dbReference>
<dbReference type="GO" id="GO:0009845">
    <property type="term" value="P:seed germination"/>
    <property type="evidence" value="ECO:0000315"/>
    <property type="project" value="UniProtKB"/>
</dbReference>
<dbReference type="CDD" id="cd22152">
    <property type="entry name" value="F-box_AtAFR-like"/>
    <property type="match status" value="1"/>
</dbReference>
<dbReference type="FunFam" id="2.120.10.80:FF:000210">
    <property type="entry name" value="F-box/kelch-repeat protein At4g19330"/>
    <property type="match status" value="1"/>
</dbReference>
<dbReference type="Gene3D" id="2.120.10.80">
    <property type="entry name" value="Kelch-type beta propeller"/>
    <property type="match status" value="1"/>
</dbReference>
<dbReference type="InterPro" id="IPR036047">
    <property type="entry name" value="F-box-like_dom_sf"/>
</dbReference>
<dbReference type="InterPro" id="IPR050354">
    <property type="entry name" value="F-box/kelch-repeat_ARATH"/>
</dbReference>
<dbReference type="InterPro" id="IPR001810">
    <property type="entry name" value="F-box_dom"/>
</dbReference>
<dbReference type="InterPro" id="IPR015915">
    <property type="entry name" value="Kelch-typ_b-propeller"/>
</dbReference>
<dbReference type="InterPro" id="IPR006652">
    <property type="entry name" value="Kelch_1"/>
</dbReference>
<dbReference type="PANTHER" id="PTHR24414">
    <property type="entry name" value="F-BOX/KELCH-REPEAT PROTEIN SKIP4"/>
    <property type="match status" value="1"/>
</dbReference>
<dbReference type="PANTHER" id="PTHR24414:SF68">
    <property type="entry name" value="GALACTOSE OXIDASE_KELCH REPEAT SUPERFAMILY PROTEIN-RELATED"/>
    <property type="match status" value="1"/>
</dbReference>
<dbReference type="Pfam" id="PF00646">
    <property type="entry name" value="F-box"/>
    <property type="match status" value="1"/>
</dbReference>
<dbReference type="Pfam" id="PF25210">
    <property type="entry name" value="Kelch_FKB95"/>
    <property type="match status" value="1"/>
</dbReference>
<dbReference type="SMART" id="SM00256">
    <property type="entry name" value="FBOX"/>
    <property type="match status" value="1"/>
</dbReference>
<dbReference type="SMART" id="SM00612">
    <property type="entry name" value="Kelch"/>
    <property type="match status" value="2"/>
</dbReference>
<dbReference type="SUPFAM" id="SSF81383">
    <property type="entry name" value="F-box domain"/>
    <property type="match status" value="1"/>
</dbReference>
<dbReference type="SUPFAM" id="SSF117281">
    <property type="entry name" value="Kelch motif"/>
    <property type="match status" value="1"/>
</dbReference>
<dbReference type="PROSITE" id="PS50181">
    <property type="entry name" value="FBOX"/>
    <property type="match status" value="1"/>
</dbReference>
<comment type="function">
    <text evidence="4">Involved in seed germination.</text>
</comment>
<comment type="sequence caution" evidence="5">
    <conflict type="erroneous gene model prediction">
        <sequence resource="EMBL-CDS" id="CAA18620"/>
    </conflict>
    <text>The predicted gene has been split into 2 genes: At4g19275 and At4g19330.</text>
</comment>
<comment type="sequence caution" evidence="5">
    <conflict type="erroneous gene model prediction">
        <sequence resource="EMBL-CDS" id="CAB78935"/>
    </conflict>
    <text>The predicted gene has been split into 2 genes: At4g19275 and At4g19330.</text>
</comment>
<sequence>MAYLSFKSNMERTPRESNTPCPPPQPSPSLFSSLPDDIVLNILARISTSYYQTLSLVSKTFRLLILSKELDMERSYLGTRKPCVYVCLQSPTHPFDRRWFGLWIKPYDHQPLTHWTIDIKCTGHWLLPMPSPYSRCLQIVHETVGSETYEIGGQNMTPSTDVWVYDKLIGKQRKAPSMMVARKNAFTCVLDGKLYVMGGCEADESTHWAEVFDPKTQTWEALPDPGVELRYSSVKNIQTKQGKVYVRSNKKNFVYLIKECMWEVAEENLGESTCEIENVCYCYSNKRYWWYDAKCEEWRLVKGVSGLYEYYKTDSEIGNYGGKLVVFWDRAVSRLTATKEIWCAMISLEKGHDGEIWGHIEWLDAVLIAPRSYALSHCMDFLQ</sequence>
<accession>O65704</accession>
<accession>C6EMZ0</accession>
<reference key="1">
    <citation type="journal article" date="2017" name="Plant Gene">
        <title>A misannotated locus positively influencing Arabidopsis seed germination is deconvoluted using multiple methods, including surrogate splicing.</title>
        <authorList>
            <person name="Majee M."/>
            <person name="Wu S."/>
            <person name="Salaita L."/>
            <person name="Chappell J."/>
            <person name="Gingerich D."/>
            <person name="Dirk L.M.A."/>
            <person name="Chappell J."/>
            <person name="Hunt A.G."/>
            <person name="Vierstra R."/>
            <person name="Downie B."/>
        </authorList>
    </citation>
    <scope>NUCLEOTIDE SEQUENCE [GENOMIC DNA]</scope>
    <scope>FUNCTION</scope>
</reference>
<reference key="2">
    <citation type="journal article" date="1999" name="Nature">
        <title>Sequence and analysis of chromosome 4 of the plant Arabidopsis thaliana.</title>
        <authorList>
            <person name="Mayer K.F.X."/>
            <person name="Schueller C."/>
            <person name="Wambutt R."/>
            <person name="Murphy G."/>
            <person name="Volckaert G."/>
            <person name="Pohl T."/>
            <person name="Duesterhoeft A."/>
            <person name="Stiekema W."/>
            <person name="Entian K.-D."/>
            <person name="Terryn N."/>
            <person name="Harris B."/>
            <person name="Ansorge W."/>
            <person name="Brandt P."/>
            <person name="Grivell L.A."/>
            <person name="Rieger M."/>
            <person name="Weichselgartner M."/>
            <person name="de Simone V."/>
            <person name="Obermaier B."/>
            <person name="Mache R."/>
            <person name="Mueller M."/>
            <person name="Kreis M."/>
            <person name="Delseny M."/>
            <person name="Puigdomenech P."/>
            <person name="Watson M."/>
            <person name="Schmidtheini T."/>
            <person name="Reichert B."/>
            <person name="Portetelle D."/>
            <person name="Perez-Alonso M."/>
            <person name="Boutry M."/>
            <person name="Bancroft I."/>
            <person name="Vos P."/>
            <person name="Hoheisel J."/>
            <person name="Zimmermann W."/>
            <person name="Wedler H."/>
            <person name="Ridley P."/>
            <person name="Langham S.-A."/>
            <person name="McCullagh B."/>
            <person name="Bilham L."/>
            <person name="Robben J."/>
            <person name="van der Schueren J."/>
            <person name="Grymonprez B."/>
            <person name="Chuang Y.-J."/>
            <person name="Vandenbussche F."/>
            <person name="Braeken M."/>
            <person name="Weltjens I."/>
            <person name="Voet M."/>
            <person name="Bastiaens I."/>
            <person name="Aert R."/>
            <person name="Defoor E."/>
            <person name="Weitzenegger T."/>
            <person name="Bothe G."/>
            <person name="Ramsperger U."/>
            <person name="Hilbert H."/>
            <person name="Braun M."/>
            <person name="Holzer E."/>
            <person name="Brandt A."/>
            <person name="Peters S."/>
            <person name="van Staveren M."/>
            <person name="Dirkse W."/>
            <person name="Mooijman P."/>
            <person name="Klein Lankhorst R."/>
            <person name="Rose M."/>
            <person name="Hauf J."/>
            <person name="Koetter P."/>
            <person name="Berneiser S."/>
            <person name="Hempel S."/>
            <person name="Feldpausch M."/>
            <person name="Lamberth S."/>
            <person name="Van den Daele H."/>
            <person name="De Keyser A."/>
            <person name="Buysshaert C."/>
            <person name="Gielen J."/>
            <person name="Villarroel R."/>
            <person name="De Clercq R."/>
            <person name="van Montagu M."/>
            <person name="Rogers J."/>
            <person name="Cronin A."/>
            <person name="Quail M.A."/>
            <person name="Bray-Allen S."/>
            <person name="Clark L."/>
            <person name="Doggett J."/>
            <person name="Hall S."/>
            <person name="Kay M."/>
            <person name="Lennard N."/>
            <person name="McLay K."/>
            <person name="Mayes R."/>
            <person name="Pettett A."/>
            <person name="Rajandream M.A."/>
            <person name="Lyne M."/>
            <person name="Benes V."/>
            <person name="Rechmann S."/>
            <person name="Borkova D."/>
            <person name="Bloecker H."/>
            <person name="Scharfe M."/>
            <person name="Grimm M."/>
            <person name="Loehnert T.-H."/>
            <person name="Dose S."/>
            <person name="de Haan M."/>
            <person name="Maarse A.C."/>
            <person name="Schaefer M."/>
            <person name="Mueller-Auer S."/>
            <person name="Gabel C."/>
            <person name="Fuchs M."/>
            <person name="Fartmann B."/>
            <person name="Granderath K."/>
            <person name="Dauner D."/>
            <person name="Herzl A."/>
            <person name="Neumann S."/>
            <person name="Argiriou A."/>
            <person name="Vitale D."/>
            <person name="Liguori R."/>
            <person name="Piravandi E."/>
            <person name="Massenet O."/>
            <person name="Quigley F."/>
            <person name="Clabauld G."/>
            <person name="Muendlein A."/>
            <person name="Felber R."/>
            <person name="Schnabl S."/>
            <person name="Hiller R."/>
            <person name="Schmidt W."/>
            <person name="Lecharny A."/>
            <person name="Aubourg S."/>
            <person name="Chefdor F."/>
            <person name="Cooke R."/>
            <person name="Berger C."/>
            <person name="Monfort A."/>
            <person name="Casacuberta E."/>
            <person name="Gibbons T."/>
            <person name="Weber N."/>
            <person name="Vandenbol M."/>
            <person name="Bargues M."/>
            <person name="Terol J."/>
            <person name="Torres A."/>
            <person name="Perez-Perez A."/>
            <person name="Purnelle B."/>
            <person name="Bent E."/>
            <person name="Johnson S."/>
            <person name="Tacon D."/>
            <person name="Jesse T."/>
            <person name="Heijnen L."/>
            <person name="Schwarz S."/>
            <person name="Scholler P."/>
            <person name="Heber S."/>
            <person name="Francs P."/>
            <person name="Bielke C."/>
            <person name="Frishman D."/>
            <person name="Haase D."/>
            <person name="Lemcke K."/>
            <person name="Mewes H.-W."/>
            <person name="Stocker S."/>
            <person name="Zaccaria P."/>
            <person name="Bevan M."/>
            <person name="Wilson R.K."/>
            <person name="de la Bastide M."/>
            <person name="Habermann K."/>
            <person name="Parnell L."/>
            <person name="Dedhia N."/>
            <person name="Gnoj L."/>
            <person name="Schutz K."/>
            <person name="Huang E."/>
            <person name="Spiegel L."/>
            <person name="Sekhon M."/>
            <person name="Murray J."/>
            <person name="Sheet P."/>
            <person name="Cordes M."/>
            <person name="Abu-Threideh J."/>
            <person name="Stoneking T."/>
            <person name="Kalicki J."/>
            <person name="Graves T."/>
            <person name="Harmon G."/>
            <person name="Edwards J."/>
            <person name="Latreille P."/>
            <person name="Courtney L."/>
            <person name="Cloud J."/>
            <person name="Abbott A."/>
            <person name="Scott K."/>
            <person name="Johnson D."/>
            <person name="Minx P."/>
            <person name="Bentley D."/>
            <person name="Fulton B."/>
            <person name="Miller N."/>
            <person name="Greco T."/>
            <person name="Kemp K."/>
            <person name="Kramer J."/>
            <person name="Fulton L."/>
            <person name="Mardis E."/>
            <person name="Dante M."/>
            <person name="Pepin K."/>
            <person name="Hillier L.W."/>
            <person name="Nelson J."/>
            <person name="Spieth J."/>
            <person name="Ryan E."/>
            <person name="Andrews S."/>
            <person name="Geisel C."/>
            <person name="Layman D."/>
            <person name="Du H."/>
            <person name="Ali J."/>
            <person name="Berghoff A."/>
            <person name="Jones K."/>
            <person name="Drone K."/>
            <person name="Cotton M."/>
            <person name="Joshu C."/>
            <person name="Antonoiu B."/>
            <person name="Zidanic M."/>
            <person name="Strong C."/>
            <person name="Sun H."/>
            <person name="Lamar B."/>
            <person name="Yordan C."/>
            <person name="Ma P."/>
            <person name="Zhong J."/>
            <person name="Preston R."/>
            <person name="Vil D."/>
            <person name="Shekher M."/>
            <person name="Matero A."/>
            <person name="Shah R."/>
            <person name="Swaby I.K."/>
            <person name="O'Shaughnessy A."/>
            <person name="Rodriguez M."/>
            <person name="Hoffman J."/>
            <person name="Till S."/>
            <person name="Granat S."/>
            <person name="Shohdy N."/>
            <person name="Hasegawa A."/>
            <person name="Hameed A."/>
            <person name="Lodhi M."/>
            <person name="Johnson A."/>
            <person name="Chen E."/>
            <person name="Marra M.A."/>
            <person name="Martienssen R."/>
            <person name="McCombie W.R."/>
        </authorList>
    </citation>
    <scope>NUCLEOTIDE SEQUENCE [LARGE SCALE GENOMIC DNA]</scope>
    <source>
        <strain>cv. Columbia</strain>
    </source>
</reference>
<reference key="3">
    <citation type="journal article" date="2017" name="Plant J.">
        <title>Araport11: a complete reannotation of the Arabidopsis thaliana reference genome.</title>
        <authorList>
            <person name="Cheng C.Y."/>
            <person name="Krishnakumar V."/>
            <person name="Chan A.P."/>
            <person name="Thibaud-Nissen F."/>
            <person name="Schobel S."/>
            <person name="Town C.D."/>
        </authorList>
    </citation>
    <scope>GENOME REANNOTATION</scope>
    <source>
        <strain>cv. Columbia</strain>
    </source>
</reference>
<gene>
    <name evidence="6" type="primary">CTG10</name>
    <name type="ordered locus">At4g19330</name>
    <name evidence="7" type="ORF">T5K18.110</name>
</gene>
<proteinExistence type="predicted"/>